<gene>
    <name type="primary">ppa1</name>
    <name type="ORF">SPAC823.15</name>
</gene>
<accession>P23635</accession>
<evidence type="ECO:0000250" key="1"/>
<evidence type="ECO:0000305" key="2"/>
<keyword id="KW-0131">Cell cycle</keyword>
<keyword id="KW-0132">Cell division</keyword>
<keyword id="KW-0378">Hydrolase</keyword>
<keyword id="KW-0464">Manganese</keyword>
<keyword id="KW-0479">Metal-binding</keyword>
<keyword id="KW-0488">Methylation</keyword>
<keyword id="KW-0498">Mitosis</keyword>
<keyword id="KW-0904">Protein phosphatase</keyword>
<keyword id="KW-1185">Reference proteome</keyword>
<feature type="chain" id="PRO_0000058871" description="Minor serine/threonine-protein phosphatase PP2A-1 catalytic subunit">
    <location>
        <begin position="1"/>
        <end position="309"/>
    </location>
</feature>
<feature type="active site" description="Proton donor" evidence="1">
    <location>
        <position position="118"/>
    </location>
</feature>
<feature type="binding site" evidence="1">
    <location>
        <position position="57"/>
    </location>
    <ligand>
        <name>Mn(2+)</name>
        <dbReference type="ChEBI" id="CHEBI:29035"/>
        <label>1</label>
    </ligand>
</feature>
<feature type="binding site" evidence="1">
    <location>
        <position position="59"/>
    </location>
    <ligand>
        <name>Mn(2+)</name>
        <dbReference type="ChEBI" id="CHEBI:29035"/>
        <label>1</label>
    </ligand>
</feature>
<feature type="binding site" evidence="1">
    <location>
        <position position="85"/>
    </location>
    <ligand>
        <name>Mn(2+)</name>
        <dbReference type="ChEBI" id="CHEBI:29035"/>
        <label>1</label>
    </ligand>
</feature>
<feature type="binding site" evidence="1">
    <location>
        <position position="85"/>
    </location>
    <ligand>
        <name>Mn(2+)</name>
        <dbReference type="ChEBI" id="CHEBI:29035"/>
        <label>2</label>
    </ligand>
</feature>
<feature type="binding site" evidence="1">
    <location>
        <position position="117"/>
    </location>
    <ligand>
        <name>Mn(2+)</name>
        <dbReference type="ChEBI" id="CHEBI:29035"/>
        <label>2</label>
    </ligand>
</feature>
<feature type="binding site" evidence="1">
    <location>
        <position position="167"/>
    </location>
    <ligand>
        <name>Mn(2+)</name>
        <dbReference type="ChEBI" id="CHEBI:29035"/>
        <label>2</label>
    </ligand>
</feature>
<feature type="binding site" evidence="1">
    <location>
        <position position="241"/>
    </location>
    <ligand>
        <name>Mn(2+)</name>
        <dbReference type="ChEBI" id="CHEBI:29035"/>
        <label>2</label>
    </ligand>
</feature>
<feature type="modified residue" description="Leucine methyl ester" evidence="1">
    <location>
        <position position="309"/>
    </location>
</feature>
<name>PP2A1_SCHPO</name>
<organism>
    <name type="scientific">Schizosaccharomyces pombe (strain 972 / ATCC 24843)</name>
    <name type="common">Fission yeast</name>
    <dbReference type="NCBI Taxonomy" id="284812"/>
    <lineage>
        <taxon>Eukaryota</taxon>
        <taxon>Fungi</taxon>
        <taxon>Dikarya</taxon>
        <taxon>Ascomycota</taxon>
        <taxon>Taphrinomycotina</taxon>
        <taxon>Schizosaccharomycetes</taxon>
        <taxon>Schizosaccharomycetales</taxon>
        <taxon>Schizosaccharomycetaceae</taxon>
        <taxon>Schizosaccharomyces</taxon>
    </lineage>
</organism>
<protein>
    <recommendedName>
        <fullName>Minor serine/threonine-protein phosphatase PP2A-1 catalytic subunit</fullName>
        <ecNumber>3.1.3.16</ecNumber>
    </recommendedName>
</protein>
<dbReference type="EC" id="3.1.3.16"/>
<dbReference type="EMBL" id="M58518">
    <property type="protein sequence ID" value="AAA63578.1"/>
    <property type="molecule type" value="Genomic_DNA"/>
</dbReference>
<dbReference type="EMBL" id="CU329670">
    <property type="protein sequence ID" value="CAB90160.1"/>
    <property type="molecule type" value="Genomic_DNA"/>
</dbReference>
<dbReference type="PIR" id="A36076">
    <property type="entry name" value="A36076"/>
</dbReference>
<dbReference type="RefSeq" id="NP_593842.1">
    <property type="nucleotide sequence ID" value="NM_001019271.2"/>
</dbReference>
<dbReference type="SMR" id="P23635"/>
<dbReference type="BioGRID" id="278531">
    <property type="interactions" value="15"/>
</dbReference>
<dbReference type="DIP" id="DIP-61476N"/>
<dbReference type="FunCoup" id="P23635">
    <property type="interactions" value="496"/>
</dbReference>
<dbReference type="IntAct" id="P23635">
    <property type="interactions" value="1"/>
</dbReference>
<dbReference type="STRING" id="284812.P23635"/>
<dbReference type="PaxDb" id="4896-SPAC823.15.1"/>
<dbReference type="EnsemblFungi" id="SPAC823.15.1">
    <property type="protein sequence ID" value="SPAC823.15.1:pep"/>
    <property type="gene ID" value="SPAC823.15"/>
</dbReference>
<dbReference type="PomBase" id="SPAC823.15">
    <property type="gene designation" value="ppa1"/>
</dbReference>
<dbReference type="VEuPathDB" id="FungiDB:SPAC823.15"/>
<dbReference type="eggNOG" id="KOG0371">
    <property type="taxonomic scope" value="Eukaryota"/>
</dbReference>
<dbReference type="HOGENOM" id="CLU_004962_8_1_1"/>
<dbReference type="InParanoid" id="P23635"/>
<dbReference type="OMA" id="CMKVRYP"/>
<dbReference type="PhylomeDB" id="P23635"/>
<dbReference type="PRO" id="PR:P23635"/>
<dbReference type="Proteomes" id="UP000002485">
    <property type="component" value="Chromosome I"/>
</dbReference>
<dbReference type="GO" id="GO:0005829">
    <property type="term" value="C:cytosol"/>
    <property type="evidence" value="ECO:0000318"/>
    <property type="project" value="GO_Central"/>
</dbReference>
<dbReference type="GO" id="GO:0005634">
    <property type="term" value="C:nucleus"/>
    <property type="evidence" value="ECO:0007005"/>
    <property type="project" value="PomBase"/>
</dbReference>
<dbReference type="GO" id="GO:0046872">
    <property type="term" value="F:metal ion binding"/>
    <property type="evidence" value="ECO:0007669"/>
    <property type="project" value="UniProtKB-KW"/>
</dbReference>
<dbReference type="GO" id="GO:0004721">
    <property type="term" value="F:phosphoprotein phosphatase activity"/>
    <property type="evidence" value="ECO:0000315"/>
    <property type="project" value="PomBase"/>
</dbReference>
<dbReference type="GO" id="GO:0004722">
    <property type="term" value="F:protein serine/threonine phosphatase activity"/>
    <property type="evidence" value="ECO:0000318"/>
    <property type="project" value="GO_Central"/>
</dbReference>
<dbReference type="GO" id="GO:0051301">
    <property type="term" value="P:cell division"/>
    <property type="evidence" value="ECO:0007669"/>
    <property type="project" value="UniProtKB-KW"/>
</dbReference>
<dbReference type="GO" id="GO:0000278">
    <property type="term" value="P:mitotic cell cycle"/>
    <property type="evidence" value="ECO:0000318"/>
    <property type="project" value="GO_Central"/>
</dbReference>
<dbReference type="GO" id="GO:2000765">
    <property type="term" value="P:regulation of cytoplasmic translation"/>
    <property type="evidence" value="ECO:0000266"/>
    <property type="project" value="PomBase"/>
</dbReference>
<dbReference type="GO" id="GO:0023052">
    <property type="term" value="P:signaling"/>
    <property type="evidence" value="ECO:0000303"/>
    <property type="project" value="PomBase"/>
</dbReference>
<dbReference type="CDD" id="cd07415">
    <property type="entry name" value="MPP_PP2A_PP4_PP6"/>
    <property type="match status" value="1"/>
</dbReference>
<dbReference type="FunFam" id="3.60.21.10:FF:000003">
    <property type="entry name" value="Serine/threonine-protein phosphatase"/>
    <property type="match status" value="1"/>
</dbReference>
<dbReference type="Gene3D" id="3.60.21.10">
    <property type="match status" value="1"/>
</dbReference>
<dbReference type="InterPro" id="IPR004843">
    <property type="entry name" value="Calcineurin-like_PHP_ApaH"/>
</dbReference>
<dbReference type="InterPro" id="IPR029052">
    <property type="entry name" value="Metallo-depent_PP-like"/>
</dbReference>
<dbReference type="InterPro" id="IPR047129">
    <property type="entry name" value="PPA2-like"/>
</dbReference>
<dbReference type="InterPro" id="IPR006186">
    <property type="entry name" value="Ser/Thr-sp_prot-phosphatase"/>
</dbReference>
<dbReference type="PANTHER" id="PTHR45619">
    <property type="entry name" value="SERINE/THREONINE-PROTEIN PHOSPHATASE PP2A-RELATED"/>
    <property type="match status" value="1"/>
</dbReference>
<dbReference type="Pfam" id="PF00149">
    <property type="entry name" value="Metallophos"/>
    <property type="match status" value="1"/>
</dbReference>
<dbReference type="PRINTS" id="PR00114">
    <property type="entry name" value="STPHPHTASE"/>
</dbReference>
<dbReference type="SMART" id="SM00156">
    <property type="entry name" value="PP2Ac"/>
    <property type="match status" value="1"/>
</dbReference>
<dbReference type="SUPFAM" id="SSF56300">
    <property type="entry name" value="Metallo-dependent phosphatases"/>
    <property type="match status" value="1"/>
</dbReference>
<dbReference type="PROSITE" id="PS00125">
    <property type="entry name" value="SER_THR_PHOSPHATASE"/>
    <property type="match status" value="1"/>
</dbReference>
<reference key="1">
    <citation type="journal article" date="1990" name="Cell">
        <title>Distinct, essential roles of type 1 and 2A protein phosphatases in the control of the fission yeast cell division cycle.</title>
        <authorList>
            <person name="Kinoshita N."/>
            <person name="Ohkura H."/>
            <person name="Yanagida M."/>
        </authorList>
    </citation>
    <scope>NUCLEOTIDE SEQUENCE [GENOMIC DNA]</scope>
    <source>
        <strain>972 / HM123</strain>
    </source>
</reference>
<reference key="2">
    <citation type="journal article" date="2002" name="Nature">
        <title>The genome sequence of Schizosaccharomyces pombe.</title>
        <authorList>
            <person name="Wood V."/>
            <person name="Gwilliam R."/>
            <person name="Rajandream M.A."/>
            <person name="Lyne M.H."/>
            <person name="Lyne R."/>
            <person name="Stewart A."/>
            <person name="Sgouros J.G."/>
            <person name="Peat N."/>
            <person name="Hayles J."/>
            <person name="Baker S.G."/>
            <person name="Basham D."/>
            <person name="Bowman S."/>
            <person name="Brooks K."/>
            <person name="Brown D."/>
            <person name="Brown S."/>
            <person name="Chillingworth T."/>
            <person name="Churcher C.M."/>
            <person name="Collins M."/>
            <person name="Connor R."/>
            <person name="Cronin A."/>
            <person name="Davis P."/>
            <person name="Feltwell T."/>
            <person name="Fraser A."/>
            <person name="Gentles S."/>
            <person name="Goble A."/>
            <person name="Hamlin N."/>
            <person name="Harris D.E."/>
            <person name="Hidalgo J."/>
            <person name="Hodgson G."/>
            <person name="Holroyd S."/>
            <person name="Hornsby T."/>
            <person name="Howarth S."/>
            <person name="Huckle E.J."/>
            <person name="Hunt S."/>
            <person name="Jagels K."/>
            <person name="James K.D."/>
            <person name="Jones L."/>
            <person name="Jones M."/>
            <person name="Leather S."/>
            <person name="McDonald S."/>
            <person name="McLean J."/>
            <person name="Mooney P."/>
            <person name="Moule S."/>
            <person name="Mungall K.L."/>
            <person name="Murphy L.D."/>
            <person name="Niblett D."/>
            <person name="Odell C."/>
            <person name="Oliver K."/>
            <person name="O'Neil S."/>
            <person name="Pearson D."/>
            <person name="Quail M.A."/>
            <person name="Rabbinowitsch E."/>
            <person name="Rutherford K.M."/>
            <person name="Rutter S."/>
            <person name="Saunders D."/>
            <person name="Seeger K."/>
            <person name="Sharp S."/>
            <person name="Skelton J."/>
            <person name="Simmonds M.N."/>
            <person name="Squares R."/>
            <person name="Squares S."/>
            <person name="Stevens K."/>
            <person name="Taylor K."/>
            <person name="Taylor R.G."/>
            <person name="Tivey A."/>
            <person name="Walsh S.V."/>
            <person name="Warren T."/>
            <person name="Whitehead S."/>
            <person name="Woodward J.R."/>
            <person name="Volckaert G."/>
            <person name="Aert R."/>
            <person name="Robben J."/>
            <person name="Grymonprez B."/>
            <person name="Weltjens I."/>
            <person name="Vanstreels E."/>
            <person name="Rieger M."/>
            <person name="Schaefer M."/>
            <person name="Mueller-Auer S."/>
            <person name="Gabel C."/>
            <person name="Fuchs M."/>
            <person name="Duesterhoeft A."/>
            <person name="Fritzc C."/>
            <person name="Holzer E."/>
            <person name="Moestl D."/>
            <person name="Hilbert H."/>
            <person name="Borzym K."/>
            <person name="Langer I."/>
            <person name="Beck A."/>
            <person name="Lehrach H."/>
            <person name="Reinhardt R."/>
            <person name="Pohl T.M."/>
            <person name="Eger P."/>
            <person name="Zimmermann W."/>
            <person name="Wedler H."/>
            <person name="Wambutt R."/>
            <person name="Purnelle B."/>
            <person name="Goffeau A."/>
            <person name="Cadieu E."/>
            <person name="Dreano S."/>
            <person name="Gloux S."/>
            <person name="Lelaure V."/>
            <person name="Mottier S."/>
            <person name="Galibert F."/>
            <person name="Aves S.J."/>
            <person name="Xiang Z."/>
            <person name="Hunt C."/>
            <person name="Moore K."/>
            <person name="Hurst S.M."/>
            <person name="Lucas M."/>
            <person name="Rochet M."/>
            <person name="Gaillardin C."/>
            <person name="Tallada V.A."/>
            <person name="Garzon A."/>
            <person name="Thode G."/>
            <person name="Daga R.R."/>
            <person name="Cruzado L."/>
            <person name="Jimenez J."/>
            <person name="Sanchez M."/>
            <person name="del Rey F."/>
            <person name="Benito J."/>
            <person name="Dominguez A."/>
            <person name="Revuelta J.L."/>
            <person name="Moreno S."/>
            <person name="Armstrong J."/>
            <person name="Forsburg S.L."/>
            <person name="Cerutti L."/>
            <person name="Lowe T."/>
            <person name="McCombie W.R."/>
            <person name="Paulsen I."/>
            <person name="Potashkin J."/>
            <person name="Shpakovski G.V."/>
            <person name="Ussery D."/>
            <person name="Barrell B.G."/>
            <person name="Nurse P."/>
        </authorList>
    </citation>
    <scope>NUCLEOTIDE SEQUENCE [LARGE SCALE GENOMIC DNA]</scope>
    <source>
        <strain>972 / ATCC 24843</strain>
    </source>
</reference>
<sequence length="309" mass="35291">MSVSGKIGEVDRWIEQLSRCEPLSEEDVIQMCDLAKEVLSVESNVQSVRCPVTVCGDIHGQFHDLMELFNIGGPSPDTNYLFMGDYVDRGYHSVETVSLLIAFKIRYPQRITILRGNHESRQITQVYGFYDECLRKYGNANVWQYFTDLFDYLPLTALIEDRIFCLHGGLSPSIDTLDHVRILDRVQEVPHEGPICDLLWSDPDDRPGWGISPRGAGYTFGPDIAEAFNHNNGLDLIARAHQLVMEGYNWTTNHNVVTIFSAPNYCYRCGNQAAIMGIDDHINYAFIQYDTAPRKEELHVTRRTPDYFL</sequence>
<proteinExistence type="inferred from homology"/>
<comment type="function">
    <text>Essential role in cell cycle control. PP2A may be involved in controlling the entry into mitosis, possibly acting as an inhibitor.</text>
</comment>
<comment type="catalytic activity">
    <reaction>
        <text>O-phospho-L-seryl-[protein] + H2O = L-seryl-[protein] + phosphate</text>
        <dbReference type="Rhea" id="RHEA:20629"/>
        <dbReference type="Rhea" id="RHEA-COMP:9863"/>
        <dbReference type="Rhea" id="RHEA-COMP:11604"/>
        <dbReference type="ChEBI" id="CHEBI:15377"/>
        <dbReference type="ChEBI" id="CHEBI:29999"/>
        <dbReference type="ChEBI" id="CHEBI:43474"/>
        <dbReference type="ChEBI" id="CHEBI:83421"/>
        <dbReference type="EC" id="3.1.3.16"/>
    </reaction>
</comment>
<comment type="catalytic activity">
    <reaction>
        <text>O-phospho-L-threonyl-[protein] + H2O = L-threonyl-[protein] + phosphate</text>
        <dbReference type="Rhea" id="RHEA:47004"/>
        <dbReference type="Rhea" id="RHEA-COMP:11060"/>
        <dbReference type="Rhea" id="RHEA-COMP:11605"/>
        <dbReference type="ChEBI" id="CHEBI:15377"/>
        <dbReference type="ChEBI" id="CHEBI:30013"/>
        <dbReference type="ChEBI" id="CHEBI:43474"/>
        <dbReference type="ChEBI" id="CHEBI:61977"/>
        <dbReference type="EC" id="3.1.3.16"/>
    </reaction>
</comment>
<comment type="cofactor">
    <cofactor evidence="1">
        <name>Mn(2+)</name>
        <dbReference type="ChEBI" id="CHEBI:29035"/>
    </cofactor>
    <text evidence="1">Binds 2 manganese ions per subunit.</text>
</comment>
<comment type="similarity">
    <text evidence="2">Belongs to the PPP phosphatase family. PP-2A subfamily.</text>
</comment>